<protein>
    <recommendedName>
        <fullName evidence="5">Acyl-coenzyme A diphosphatase fit1</fullName>
        <ecNumber evidence="3">3.6.1.-</ecNumber>
    </recommendedName>
    <alternativeName>
        <fullName evidence="3">Acyl-coenzyme A diphosphatase scs3</fullName>
    </alternativeName>
    <alternativeName>
        <fullName evidence="3">FIT family protein scs3</fullName>
    </alternativeName>
</protein>
<organism>
    <name type="scientific">Schizosaccharomyces pombe (strain 972 / ATCC 24843)</name>
    <name type="common">Fission yeast</name>
    <dbReference type="NCBI Taxonomy" id="284812"/>
    <lineage>
        <taxon>Eukaryota</taxon>
        <taxon>Fungi</taxon>
        <taxon>Dikarya</taxon>
        <taxon>Ascomycota</taxon>
        <taxon>Taphrinomycotina</taxon>
        <taxon>Schizosaccharomycetes</taxon>
        <taxon>Schizosaccharomycetales</taxon>
        <taxon>Schizosaccharomycetaceae</taxon>
        <taxon>Schizosaccharomyces</taxon>
    </lineage>
</organism>
<name>SCS3_SCHPO</name>
<keyword id="KW-0256">Endoplasmic reticulum</keyword>
<keyword id="KW-0325">Glycoprotein</keyword>
<keyword id="KW-0378">Hydrolase</keyword>
<keyword id="KW-0444">Lipid biosynthesis</keyword>
<keyword id="KW-0443">Lipid metabolism</keyword>
<keyword id="KW-0472">Membrane</keyword>
<keyword id="KW-0594">Phospholipid biosynthesis</keyword>
<keyword id="KW-1208">Phospholipid metabolism</keyword>
<keyword id="KW-1185">Reference proteome</keyword>
<keyword id="KW-0812">Transmembrane</keyword>
<keyword id="KW-1133">Transmembrane helix</keyword>
<dbReference type="EC" id="3.6.1.-" evidence="3"/>
<dbReference type="EMBL" id="CU329671">
    <property type="protein sequence ID" value="CAC05250.1"/>
    <property type="molecule type" value="Genomic_DNA"/>
</dbReference>
<dbReference type="RefSeq" id="NP_596796.1">
    <property type="nucleotide sequence ID" value="NM_001023816.2"/>
</dbReference>
<dbReference type="BioGRID" id="277389">
    <property type="interactions" value="9"/>
</dbReference>
<dbReference type="FunCoup" id="Q9HGM4">
    <property type="interactions" value="172"/>
</dbReference>
<dbReference type="STRING" id="284812.Q9HGM4"/>
<dbReference type="GlyCosmos" id="Q9HGM4">
    <property type="glycosylation" value="1 site, No reported glycans"/>
</dbReference>
<dbReference type="PaxDb" id="4896-SPBC543.08.1"/>
<dbReference type="EnsemblFungi" id="SPBC543.08.1">
    <property type="protein sequence ID" value="SPBC543.08.1:pep"/>
    <property type="gene ID" value="SPBC543.08"/>
</dbReference>
<dbReference type="GeneID" id="2540872"/>
<dbReference type="KEGG" id="spo:2540872"/>
<dbReference type="PomBase" id="SPBC543.08">
    <property type="gene designation" value="fit1"/>
</dbReference>
<dbReference type="VEuPathDB" id="FungiDB:SPBC543.08"/>
<dbReference type="eggNOG" id="KOG3750">
    <property type="taxonomic scope" value="Eukaryota"/>
</dbReference>
<dbReference type="HOGENOM" id="CLU_048143_0_0_1"/>
<dbReference type="InParanoid" id="Q9HGM4"/>
<dbReference type="OMA" id="FTSWFFG"/>
<dbReference type="PhylomeDB" id="Q9HGM4"/>
<dbReference type="Reactome" id="R-SPO-8964572">
    <property type="pathway name" value="Lipid particle organization"/>
</dbReference>
<dbReference type="PRO" id="PR:Q9HGM4"/>
<dbReference type="Proteomes" id="UP000002485">
    <property type="component" value="Chromosome II"/>
</dbReference>
<dbReference type="GO" id="GO:0005783">
    <property type="term" value="C:endoplasmic reticulum"/>
    <property type="evidence" value="ECO:0007005"/>
    <property type="project" value="PomBase"/>
</dbReference>
<dbReference type="GO" id="GO:0005788">
    <property type="term" value="C:endoplasmic reticulum lumen"/>
    <property type="evidence" value="ECO:0000250"/>
    <property type="project" value="UniProtKB"/>
</dbReference>
<dbReference type="GO" id="GO:0005789">
    <property type="term" value="C:endoplasmic reticulum membrane"/>
    <property type="evidence" value="ECO:0000250"/>
    <property type="project" value="UniProtKB"/>
</dbReference>
<dbReference type="GO" id="GO:0010945">
    <property type="term" value="F:coenzyme A diphosphatase activity"/>
    <property type="evidence" value="ECO:0000250"/>
    <property type="project" value="PomBase"/>
</dbReference>
<dbReference type="GO" id="GO:0016818">
    <property type="term" value="F:hydrolase activity, acting on acid anhydrides, in phosphorus-containing anhydrides"/>
    <property type="evidence" value="ECO:0000250"/>
    <property type="project" value="UniProtKB"/>
</dbReference>
<dbReference type="GO" id="GO:0140042">
    <property type="term" value="P:lipid droplet formation"/>
    <property type="evidence" value="ECO:0000250"/>
    <property type="project" value="UniProtKB"/>
</dbReference>
<dbReference type="GO" id="GO:0034389">
    <property type="term" value="P:lipid droplet organization"/>
    <property type="evidence" value="ECO:0000318"/>
    <property type="project" value="GO_Central"/>
</dbReference>
<dbReference type="GO" id="GO:0019915">
    <property type="term" value="P:lipid storage"/>
    <property type="evidence" value="ECO:0000318"/>
    <property type="project" value="GO_Central"/>
</dbReference>
<dbReference type="GO" id="GO:0008654">
    <property type="term" value="P:phospholipid biosynthetic process"/>
    <property type="evidence" value="ECO:0000318"/>
    <property type="project" value="GO_Central"/>
</dbReference>
<dbReference type="HAMAP" id="MF_03231">
    <property type="entry name" value="SCS3"/>
    <property type="match status" value="1"/>
</dbReference>
<dbReference type="InterPro" id="IPR019388">
    <property type="entry name" value="FIT"/>
</dbReference>
<dbReference type="InterPro" id="IPR046400">
    <property type="entry name" value="SCS3"/>
</dbReference>
<dbReference type="PANTHER" id="PTHR23129">
    <property type="entry name" value="ACYL-COENZYME A DIPHOSPHATASE FITM2"/>
    <property type="match status" value="1"/>
</dbReference>
<dbReference type="PANTHER" id="PTHR23129:SF0">
    <property type="entry name" value="ACYL-COENZYME A DIPHOSPHATASE FITM2"/>
    <property type="match status" value="1"/>
</dbReference>
<dbReference type="Pfam" id="PF10261">
    <property type="entry name" value="FIT"/>
    <property type="match status" value="2"/>
</dbReference>
<proteinExistence type="inferred from homology"/>
<accession>Q9HGM4</accession>
<gene>
    <name evidence="6" type="primary">fit1</name>
    <name evidence="3" type="synonym">fit2b</name>
    <name evidence="3" type="synonym">scs3</name>
    <name type="ORF">SPBC543.08</name>
</gene>
<feature type="chain" id="PRO_0000374041" description="Acyl-coenzyme A diphosphatase fit1">
    <location>
        <begin position="1"/>
        <end position="250"/>
    </location>
</feature>
<feature type="topological domain" description="Cytoplasmic" evidence="5">
    <location>
        <begin position="1"/>
        <end position="23"/>
    </location>
</feature>
<feature type="transmembrane region" description="Helical" evidence="2">
    <location>
        <begin position="24"/>
        <end position="44"/>
    </location>
</feature>
<feature type="topological domain" description="Lumenal" evidence="5">
    <location>
        <begin position="45"/>
        <end position="58"/>
    </location>
</feature>
<feature type="transmembrane region" description="Helical" evidence="2">
    <location>
        <begin position="59"/>
        <end position="79"/>
    </location>
</feature>
<feature type="topological domain" description="Cytoplasmic" evidence="5">
    <location>
        <begin position="80"/>
        <end position="95"/>
    </location>
</feature>
<feature type="transmembrane region" description="Helical" evidence="2">
    <location>
        <begin position="96"/>
        <end position="116"/>
    </location>
</feature>
<feature type="topological domain" description="Lumenal" evidence="5">
    <location>
        <begin position="117"/>
        <end position="160"/>
    </location>
</feature>
<feature type="transmembrane region" description="Helical" evidence="2">
    <location>
        <begin position="161"/>
        <end position="181"/>
    </location>
</feature>
<feature type="topological domain" description="Cytoplasmic" evidence="5">
    <location>
        <begin position="182"/>
        <end position="191"/>
    </location>
</feature>
<feature type="transmembrane region" description="Helical" evidence="2">
    <location>
        <begin position="192"/>
        <end position="212"/>
    </location>
</feature>
<feature type="topological domain" description="Lumenal" evidence="5">
    <location>
        <position position="213"/>
    </location>
</feature>
<feature type="transmembrane region" description="Helical" evidence="2">
    <location>
        <begin position="214"/>
        <end position="234"/>
    </location>
</feature>
<feature type="topological domain" description="Cytoplasmic" evidence="5">
    <location>
        <begin position="235"/>
        <end position="250"/>
    </location>
</feature>
<feature type="active site" evidence="3">
    <location>
        <position position="161"/>
    </location>
</feature>
<feature type="active site" evidence="3">
    <location>
        <position position="212"/>
    </location>
</feature>
<feature type="glycosylation site" description="N-linked (GlcNAc...) asparagine" evidence="2">
    <location>
        <position position="149"/>
    </location>
</feature>
<evidence type="ECO:0000250" key="1">
    <source>
        <dbReference type="UniProtKB" id="P53012"/>
    </source>
</evidence>
<evidence type="ECO:0000255" key="2"/>
<evidence type="ECO:0000255" key="3">
    <source>
        <dbReference type="HAMAP-Rule" id="MF_03231"/>
    </source>
</evidence>
<evidence type="ECO:0000269" key="4">
    <source>
    </source>
</evidence>
<evidence type="ECO:0000305" key="5"/>
<evidence type="ECO:0000312" key="6">
    <source>
        <dbReference type="PomBase" id="SPBC543.08"/>
    </source>
</evidence>
<reference key="1">
    <citation type="journal article" date="2002" name="Nature">
        <title>The genome sequence of Schizosaccharomyces pombe.</title>
        <authorList>
            <person name="Wood V."/>
            <person name="Gwilliam R."/>
            <person name="Rajandream M.A."/>
            <person name="Lyne M.H."/>
            <person name="Lyne R."/>
            <person name="Stewart A."/>
            <person name="Sgouros J.G."/>
            <person name="Peat N."/>
            <person name="Hayles J."/>
            <person name="Baker S.G."/>
            <person name="Basham D."/>
            <person name="Bowman S."/>
            <person name="Brooks K."/>
            <person name="Brown D."/>
            <person name="Brown S."/>
            <person name="Chillingworth T."/>
            <person name="Churcher C.M."/>
            <person name="Collins M."/>
            <person name="Connor R."/>
            <person name="Cronin A."/>
            <person name="Davis P."/>
            <person name="Feltwell T."/>
            <person name="Fraser A."/>
            <person name="Gentles S."/>
            <person name="Goble A."/>
            <person name="Hamlin N."/>
            <person name="Harris D.E."/>
            <person name="Hidalgo J."/>
            <person name="Hodgson G."/>
            <person name="Holroyd S."/>
            <person name="Hornsby T."/>
            <person name="Howarth S."/>
            <person name="Huckle E.J."/>
            <person name="Hunt S."/>
            <person name="Jagels K."/>
            <person name="James K.D."/>
            <person name="Jones L."/>
            <person name="Jones M."/>
            <person name="Leather S."/>
            <person name="McDonald S."/>
            <person name="McLean J."/>
            <person name="Mooney P."/>
            <person name="Moule S."/>
            <person name="Mungall K.L."/>
            <person name="Murphy L.D."/>
            <person name="Niblett D."/>
            <person name="Odell C."/>
            <person name="Oliver K."/>
            <person name="O'Neil S."/>
            <person name="Pearson D."/>
            <person name="Quail M.A."/>
            <person name="Rabbinowitsch E."/>
            <person name="Rutherford K.M."/>
            <person name="Rutter S."/>
            <person name="Saunders D."/>
            <person name="Seeger K."/>
            <person name="Sharp S."/>
            <person name="Skelton J."/>
            <person name="Simmonds M.N."/>
            <person name="Squares R."/>
            <person name="Squares S."/>
            <person name="Stevens K."/>
            <person name="Taylor K."/>
            <person name="Taylor R.G."/>
            <person name="Tivey A."/>
            <person name="Walsh S.V."/>
            <person name="Warren T."/>
            <person name="Whitehead S."/>
            <person name="Woodward J.R."/>
            <person name="Volckaert G."/>
            <person name="Aert R."/>
            <person name="Robben J."/>
            <person name="Grymonprez B."/>
            <person name="Weltjens I."/>
            <person name="Vanstreels E."/>
            <person name="Rieger M."/>
            <person name="Schaefer M."/>
            <person name="Mueller-Auer S."/>
            <person name="Gabel C."/>
            <person name="Fuchs M."/>
            <person name="Duesterhoeft A."/>
            <person name="Fritzc C."/>
            <person name="Holzer E."/>
            <person name="Moestl D."/>
            <person name="Hilbert H."/>
            <person name="Borzym K."/>
            <person name="Langer I."/>
            <person name="Beck A."/>
            <person name="Lehrach H."/>
            <person name="Reinhardt R."/>
            <person name="Pohl T.M."/>
            <person name="Eger P."/>
            <person name="Zimmermann W."/>
            <person name="Wedler H."/>
            <person name="Wambutt R."/>
            <person name="Purnelle B."/>
            <person name="Goffeau A."/>
            <person name="Cadieu E."/>
            <person name="Dreano S."/>
            <person name="Gloux S."/>
            <person name="Lelaure V."/>
            <person name="Mottier S."/>
            <person name="Galibert F."/>
            <person name="Aves S.J."/>
            <person name="Xiang Z."/>
            <person name="Hunt C."/>
            <person name="Moore K."/>
            <person name="Hurst S.M."/>
            <person name="Lucas M."/>
            <person name="Rochet M."/>
            <person name="Gaillardin C."/>
            <person name="Tallada V.A."/>
            <person name="Garzon A."/>
            <person name="Thode G."/>
            <person name="Daga R.R."/>
            <person name="Cruzado L."/>
            <person name="Jimenez J."/>
            <person name="Sanchez M."/>
            <person name="del Rey F."/>
            <person name="Benito J."/>
            <person name="Dominguez A."/>
            <person name="Revuelta J.L."/>
            <person name="Moreno S."/>
            <person name="Armstrong J."/>
            <person name="Forsburg S.L."/>
            <person name="Cerutti L."/>
            <person name="Lowe T."/>
            <person name="McCombie W.R."/>
            <person name="Paulsen I."/>
            <person name="Potashkin J."/>
            <person name="Shpakovski G.V."/>
            <person name="Ussery D."/>
            <person name="Barrell B.G."/>
            <person name="Nurse P."/>
        </authorList>
    </citation>
    <scope>NUCLEOTIDE SEQUENCE [LARGE SCALE GENOMIC DNA]</scope>
    <source>
        <strain>972 / ATCC 24843</strain>
    </source>
</reference>
<reference key="2">
    <citation type="journal article" date="2006" name="Nat. Biotechnol.">
        <title>ORFeome cloning and global analysis of protein localization in the fission yeast Schizosaccharomyces pombe.</title>
        <authorList>
            <person name="Matsuyama A."/>
            <person name="Arai R."/>
            <person name="Yashiroda Y."/>
            <person name="Shirai A."/>
            <person name="Kamata A."/>
            <person name="Sekido S."/>
            <person name="Kobayashi Y."/>
            <person name="Hashimoto A."/>
            <person name="Hamamoto M."/>
            <person name="Hiraoka Y."/>
            <person name="Horinouchi S."/>
            <person name="Yoshida M."/>
        </authorList>
    </citation>
    <scope>SUBCELLULAR LOCATION [LARGE SCALE ANALYSIS]</scope>
</reference>
<comment type="function">
    <text evidence="3">Fatty acyl-coenzyme A (CoA) diphosphatase that hydrolyzes fatty acyl-CoA to yield acyl-4'-phosphopantetheine and adenosine 3',5'-bisphosphate (By similarity). Preferentially hydrolyzes unsaturated long-chain acyl-CoA substrates in the endoplasmic reticulum (ER) lumen (By similarity). This catalytic activity is required for maintaining ER structure and for lipid droplets (LDs) biogenesis, which are lipid storage organelles involved in maintaining lipid and energy homeostasis (By similarity). May directly bind to diacylglycerol (DAGs) and triacylglycerol, which is also important for LD biogenesis (By similarity). May support directional budding of nacent LDs from the ER into the cytosol by reducing DAG levels at sites of LD formation (By similarity). May play a role in the regulation of cell morphology and cytoskeletal organization (By similarity).</text>
</comment>
<comment type="catalytic activity">
    <reaction evidence="3">
        <text>an acyl-CoA + H2O = an acyl-4'-phosphopantetheine + adenosine 3',5'-bisphosphate + 2 H(+)</text>
        <dbReference type="Rhea" id="RHEA:50044"/>
        <dbReference type="ChEBI" id="CHEBI:15377"/>
        <dbReference type="ChEBI" id="CHEBI:15378"/>
        <dbReference type="ChEBI" id="CHEBI:58342"/>
        <dbReference type="ChEBI" id="CHEBI:58343"/>
        <dbReference type="ChEBI" id="CHEBI:132023"/>
    </reaction>
    <physiologicalReaction direction="left-to-right" evidence="3">
        <dbReference type="Rhea" id="RHEA:50045"/>
    </physiologicalReaction>
</comment>
<comment type="catalytic activity">
    <reaction evidence="3">
        <text>(9Z)-octadecenoyl-CoA + H2O = S-(9Z-octadecenoyl)-4'-phosphopantetheine + adenosine 3',5'-bisphosphate + 2 H(+)</text>
        <dbReference type="Rhea" id="RHEA:65564"/>
        <dbReference type="ChEBI" id="CHEBI:15377"/>
        <dbReference type="ChEBI" id="CHEBI:15378"/>
        <dbReference type="ChEBI" id="CHEBI:57387"/>
        <dbReference type="ChEBI" id="CHEBI:58343"/>
        <dbReference type="ChEBI" id="CHEBI:156553"/>
    </reaction>
    <physiologicalReaction direction="left-to-right" evidence="3">
        <dbReference type="Rhea" id="RHEA:65565"/>
    </physiologicalReaction>
</comment>
<comment type="catalytic activity">
    <reaction evidence="3">
        <text>(5Z,8Z,11Z,14Z)-eicosatetraenoyl-CoA + H2O = S-(5Z,8Z,11Z,14Z-eicosatetraenoyl)-4'-phosphopantetheine + adenosine 3',5'-bisphosphate + 2 H(+)</text>
        <dbReference type="Rhea" id="RHEA:65568"/>
        <dbReference type="ChEBI" id="CHEBI:15377"/>
        <dbReference type="ChEBI" id="CHEBI:15378"/>
        <dbReference type="ChEBI" id="CHEBI:57368"/>
        <dbReference type="ChEBI" id="CHEBI:58343"/>
        <dbReference type="ChEBI" id="CHEBI:156554"/>
    </reaction>
    <physiologicalReaction direction="left-to-right" evidence="3">
        <dbReference type="Rhea" id="RHEA:65569"/>
    </physiologicalReaction>
</comment>
<comment type="catalytic activity">
    <reaction evidence="3">
        <text>hexadecanoyl-CoA + H2O = S-hexadecanoyl-4'-phosphopantetheine + adenosine 3',5'-bisphosphate + 2 H(+)</text>
        <dbReference type="Rhea" id="RHEA:50032"/>
        <dbReference type="ChEBI" id="CHEBI:15377"/>
        <dbReference type="ChEBI" id="CHEBI:15378"/>
        <dbReference type="ChEBI" id="CHEBI:57379"/>
        <dbReference type="ChEBI" id="CHEBI:58343"/>
        <dbReference type="ChEBI" id="CHEBI:132018"/>
    </reaction>
    <physiologicalReaction direction="left-to-right" evidence="3">
        <dbReference type="Rhea" id="RHEA:50033"/>
    </physiologicalReaction>
</comment>
<comment type="subcellular location">
    <subcellularLocation>
        <location evidence="3 4">Endoplasmic reticulum membrane</location>
        <topology evidence="3">Multi-pass membrane protein</topology>
    </subcellularLocation>
    <text evidence="1">Enriched at sites of lipid droplet (LD) biogenesis.</text>
</comment>
<comment type="similarity">
    <text evidence="3">Belongs to the FIT family. Fungal FIT2B/SCS3 subfamily.</text>
</comment>
<sequence>MTEKTASHYWNEETSILKLRRKDILLFEIYATTLLLGSIYSIYVDKWSITSYFGNSKNLINLIFVKRGWFWTSLVYFYHAWDQKRNKIDFKFISRYIVATLWWMFVTQWFIGPGLIDRTFALSGGSCKNFDGDSSVFIPLTASTCKGLNGSWSGGHDLSGHVFLLTHSSLFMLSENFSFILNNGIKATSTKVLFGLLGLWWWMLFVTASFYHTTFEKCTGFFSGILEWSIVYVFSSRMPAVADLLGSSDY</sequence>